<name>Y3397_YERE8</name>
<evidence type="ECO:0000255" key="1">
    <source>
        <dbReference type="HAMAP-Rule" id="MF_00346"/>
    </source>
</evidence>
<protein>
    <recommendedName>
        <fullName evidence="1">UPF0149 protein YE3397</fullName>
    </recommendedName>
</protein>
<dbReference type="EMBL" id="AM286415">
    <property type="protein sequence ID" value="CAL13423.1"/>
    <property type="molecule type" value="Genomic_DNA"/>
</dbReference>
<dbReference type="RefSeq" id="WP_005173516.1">
    <property type="nucleotide sequence ID" value="NC_008800.1"/>
</dbReference>
<dbReference type="RefSeq" id="YP_001007566.1">
    <property type="nucleotide sequence ID" value="NC_008800.1"/>
</dbReference>
<dbReference type="SMR" id="A1JPP0"/>
<dbReference type="KEGG" id="yen:YE3397"/>
<dbReference type="PATRIC" id="fig|393305.7.peg.3608"/>
<dbReference type="eggNOG" id="COG3079">
    <property type="taxonomic scope" value="Bacteria"/>
</dbReference>
<dbReference type="HOGENOM" id="CLU_085336_1_0_6"/>
<dbReference type="OrthoDB" id="9783391at2"/>
<dbReference type="Proteomes" id="UP000000642">
    <property type="component" value="Chromosome"/>
</dbReference>
<dbReference type="GO" id="GO:0005829">
    <property type="term" value="C:cytosol"/>
    <property type="evidence" value="ECO:0007669"/>
    <property type="project" value="TreeGrafter"/>
</dbReference>
<dbReference type="FunFam" id="1.20.120.740:FF:000001">
    <property type="entry name" value="UPF0149 protein YgfB"/>
    <property type="match status" value="1"/>
</dbReference>
<dbReference type="Gene3D" id="1.20.120.740">
    <property type="entry name" value="YgfB uncharacterised protein family UPF0149, PF03695"/>
    <property type="match status" value="1"/>
</dbReference>
<dbReference type="HAMAP" id="MF_00346">
    <property type="entry name" value="UPF0149"/>
    <property type="match status" value="1"/>
</dbReference>
<dbReference type="InterPro" id="IPR011978">
    <property type="entry name" value="YgfB-like"/>
</dbReference>
<dbReference type="InterPro" id="IPR036255">
    <property type="entry name" value="YgfB-like_sf"/>
</dbReference>
<dbReference type="NCBIfam" id="NF002477">
    <property type="entry name" value="PRK01736.1"/>
    <property type="match status" value="1"/>
</dbReference>
<dbReference type="NCBIfam" id="TIGR02292">
    <property type="entry name" value="ygfB_yecA"/>
    <property type="match status" value="1"/>
</dbReference>
<dbReference type="PANTHER" id="PTHR37528">
    <property type="entry name" value="UPF0149 PROTEIN YGFB"/>
    <property type="match status" value="1"/>
</dbReference>
<dbReference type="PANTHER" id="PTHR37528:SF1">
    <property type="entry name" value="UPF0149 PROTEIN YGFB"/>
    <property type="match status" value="1"/>
</dbReference>
<dbReference type="Pfam" id="PF03695">
    <property type="entry name" value="UPF0149"/>
    <property type="match status" value="1"/>
</dbReference>
<dbReference type="SUPFAM" id="SSF101327">
    <property type="entry name" value="YgfB-like"/>
    <property type="match status" value="1"/>
</dbReference>
<feature type="chain" id="PRO_1000013054" description="UPF0149 protein YE3397">
    <location>
        <begin position="1"/>
        <end position="192"/>
    </location>
</feature>
<gene>
    <name type="ordered locus">YE3397</name>
</gene>
<proteinExistence type="inferred from homology"/>
<organism>
    <name type="scientific">Yersinia enterocolitica serotype O:8 / biotype 1B (strain NCTC 13174 / 8081)</name>
    <dbReference type="NCBI Taxonomy" id="393305"/>
    <lineage>
        <taxon>Bacteria</taxon>
        <taxon>Pseudomonadati</taxon>
        <taxon>Pseudomonadota</taxon>
        <taxon>Gammaproteobacteria</taxon>
        <taxon>Enterobacterales</taxon>
        <taxon>Yersiniaceae</taxon>
        <taxon>Yersinia</taxon>
    </lineage>
</organism>
<accession>A1JPP0</accession>
<sequence length="192" mass="21192">MSIENTLPTYQSLALALNQQAVALTPAEMHGLISGMLCGGSKDDGWRALVHDLTNEGIAFSQALGLPLQQLHEATQEALENEGFMFQLLIPEGEEVTVFDRADALSGWVNHFLLGLGMLQPKLAQVKDEVGEAIDDLRNIAQLGYDEDEDQEELAQSLEEVIEYVRVAAILCHIEFTQEKPTAPEIRKPTLH</sequence>
<comment type="similarity">
    <text evidence="1">Belongs to the UPF0149 family.</text>
</comment>
<reference key="1">
    <citation type="journal article" date="2006" name="PLoS Genet.">
        <title>The complete genome sequence and comparative genome analysis of the high pathogenicity Yersinia enterocolitica strain 8081.</title>
        <authorList>
            <person name="Thomson N.R."/>
            <person name="Howard S."/>
            <person name="Wren B.W."/>
            <person name="Holden M.T.G."/>
            <person name="Crossman L."/>
            <person name="Challis G.L."/>
            <person name="Churcher C."/>
            <person name="Mungall K."/>
            <person name="Brooks K."/>
            <person name="Chillingworth T."/>
            <person name="Feltwell T."/>
            <person name="Abdellah Z."/>
            <person name="Hauser H."/>
            <person name="Jagels K."/>
            <person name="Maddison M."/>
            <person name="Moule S."/>
            <person name="Sanders M."/>
            <person name="Whitehead S."/>
            <person name="Quail M.A."/>
            <person name="Dougan G."/>
            <person name="Parkhill J."/>
            <person name="Prentice M.B."/>
        </authorList>
    </citation>
    <scope>NUCLEOTIDE SEQUENCE [LARGE SCALE GENOMIC DNA]</scope>
    <source>
        <strain>NCTC 13174 / 8081</strain>
    </source>
</reference>